<sequence>MVLPTLAIVGRPNVGKSTIFNRILGERVSIVEDTPGVTRDRIYGKSEWLGKEFAVIDTGGIDLGDEPFLAQIKDQAEIAIDEADVILFLADIESGVTDADERVAQILYRAKKPVVLAVNKVDNPERRQDIYDFYSLGFGEPYPLSGTHGIGLGDVLDAVLAAFPSEDKSVEDDSIKFSLIGRPNVGKSSLVNAILGENRVIVSPIEGTTRDAIDTKFEAVDETFTMIDTAGIRKRGKVYENTEKYAVMRALRAIDRSDVVLFVINAEEGIREQDKKVAGYAHEAGRGIIIVVNKWDTVEKDNHTMKDFENLIRQEFQYLDYAPIIFVSAKTKQRLQSLPAMIVAVSENQTRRIQSSVLNDVLMDAITVTPTPTVNGKRLRIYYMTQVAVKPPTFVVFVNDPDLLHFSYERFLINQLRQAFDFSGTPIHIIARKRK</sequence>
<protein>
    <recommendedName>
        <fullName evidence="1">GTPase Der</fullName>
    </recommendedName>
    <alternativeName>
        <fullName evidence="1">GTP-binding protein EngA</fullName>
    </alternativeName>
</protein>
<keyword id="KW-0342">GTP-binding</keyword>
<keyword id="KW-0547">Nucleotide-binding</keyword>
<keyword id="KW-1185">Reference proteome</keyword>
<keyword id="KW-0677">Repeat</keyword>
<keyword id="KW-0690">Ribosome biogenesis</keyword>
<accession>Q039G4</accession>
<gene>
    <name evidence="1" type="primary">der</name>
    <name type="synonym">engA</name>
    <name type="ordered locus">LSEI_1380</name>
</gene>
<dbReference type="EMBL" id="CP000423">
    <property type="protein sequence ID" value="ABJ70158.1"/>
    <property type="molecule type" value="Genomic_DNA"/>
</dbReference>
<dbReference type="RefSeq" id="WP_003598629.1">
    <property type="nucleotide sequence ID" value="NC_008526.1"/>
</dbReference>
<dbReference type="RefSeq" id="YP_806600.1">
    <property type="nucleotide sequence ID" value="NC_008526.1"/>
</dbReference>
<dbReference type="SMR" id="Q039G4"/>
<dbReference type="STRING" id="321967.LSEI_1380"/>
<dbReference type="PaxDb" id="321967-LSEI_1380"/>
<dbReference type="KEGG" id="lca:LSEI_1380"/>
<dbReference type="PATRIC" id="fig|321967.11.peg.1359"/>
<dbReference type="HOGENOM" id="CLU_016077_6_2_9"/>
<dbReference type="Proteomes" id="UP000001651">
    <property type="component" value="Chromosome"/>
</dbReference>
<dbReference type="GO" id="GO:0005525">
    <property type="term" value="F:GTP binding"/>
    <property type="evidence" value="ECO:0007669"/>
    <property type="project" value="UniProtKB-UniRule"/>
</dbReference>
<dbReference type="GO" id="GO:0043022">
    <property type="term" value="F:ribosome binding"/>
    <property type="evidence" value="ECO:0007669"/>
    <property type="project" value="TreeGrafter"/>
</dbReference>
<dbReference type="GO" id="GO:0042254">
    <property type="term" value="P:ribosome biogenesis"/>
    <property type="evidence" value="ECO:0007669"/>
    <property type="project" value="UniProtKB-KW"/>
</dbReference>
<dbReference type="CDD" id="cd01894">
    <property type="entry name" value="EngA1"/>
    <property type="match status" value="1"/>
</dbReference>
<dbReference type="CDD" id="cd01895">
    <property type="entry name" value="EngA2"/>
    <property type="match status" value="1"/>
</dbReference>
<dbReference type="FunFam" id="3.30.300.20:FF:000004">
    <property type="entry name" value="GTPase Der"/>
    <property type="match status" value="1"/>
</dbReference>
<dbReference type="FunFam" id="3.40.50.300:FF:000040">
    <property type="entry name" value="GTPase Der"/>
    <property type="match status" value="1"/>
</dbReference>
<dbReference type="FunFam" id="3.40.50.300:FF:000057">
    <property type="entry name" value="GTPase Der"/>
    <property type="match status" value="1"/>
</dbReference>
<dbReference type="Gene3D" id="3.30.300.20">
    <property type="match status" value="1"/>
</dbReference>
<dbReference type="Gene3D" id="3.40.50.300">
    <property type="entry name" value="P-loop containing nucleotide triphosphate hydrolases"/>
    <property type="match status" value="2"/>
</dbReference>
<dbReference type="HAMAP" id="MF_00195">
    <property type="entry name" value="GTPase_Der"/>
    <property type="match status" value="1"/>
</dbReference>
<dbReference type="InterPro" id="IPR031166">
    <property type="entry name" value="G_ENGA"/>
</dbReference>
<dbReference type="InterPro" id="IPR006073">
    <property type="entry name" value="GTP-bd"/>
</dbReference>
<dbReference type="InterPro" id="IPR016484">
    <property type="entry name" value="GTPase_Der"/>
</dbReference>
<dbReference type="InterPro" id="IPR032859">
    <property type="entry name" value="KH_dom-like"/>
</dbReference>
<dbReference type="InterPro" id="IPR015946">
    <property type="entry name" value="KH_dom-like_a/b"/>
</dbReference>
<dbReference type="InterPro" id="IPR027417">
    <property type="entry name" value="P-loop_NTPase"/>
</dbReference>
<dbReference type="InterPro" id="IPR005225">
    <property type="entry name" value="Small_GTP-bd"/>
</dbReference>
<dbReference type="NCBIfam" id="TIGR03594">
    <property type="entry name" value="GTPase_EngA"/>
    <property type="match status" value="1"/>
</dbReference>
<dbReference type="NCBIfam" id="TIGR00231">
    <property type="entry name" value="small_GTP"/>
    <property type="match status" value="2"/>
</dbReference>
<dbReference type="PANTHER" id="PTHR43834">
    <property type="entry name" value="GTPASE DER"/>
    <property type="match status" value="1"/>
</dbReference>
<dbReference type="PANTHER" id="PTHR43834:SF6">
    <property type="entry name" value="GTPASE DER"/>
    <property type="match status" value="1"/>
</dbReference>
<dbReference type="Pfam" id="PF14714">
    <property type="entry name" value="KH_dom-like"/>
    <property type="match status" value="1"/>
</dbReference>
<dbReference type="Pfam" id="PF01926">
    <property type="entry name" value="MMR_HSR1"/>
    <property type="match status" value="2"/>
</dbReference>
<dbReference type="PIRSF" id="PIRSF006485">
    <property type="entry name" value="GTP-binding_EngA"/>
    <property type="match status" value="1"/>
</dbReference>
<dbReference type="PRINTS" id="PR00326">
    <property type="entry name" value="GTP1OBG"/>
</dbReference>
<dbReference type="SUPFAM" id="SSF52540">
    <property type="entry name" value="P-loop containing nucleoside triphosphate hydrolases"/>
    <property type="match status" value="2"/>
</dbReference>
<dbReference type="PROSITE" id="PS51712">
    <property type="entry name" value="G_ENGA"/>
    <property type="match status" value="2"/>
</dbReference>
<evidence type="ECO:0000255" key="1">
    <source>
        <dbReference type="HAMAP-Rule" id="MF_00195"/>
    </source>
</evidence>
<reference key="1">
    <citation type="journal article" date="2006" name="Proc. Natl. Acad. Sci. U.S.A.">
        <title>Comparative genomics of the lactic acid bacteria.</title>
        <authorList>
            <person name="Makarova K.S."/>
            <person name="Slesarev A."/>
            <person name="Wolf Y.I."/>
            <person name="Sorokin A."/>
            <person name="Mirkin B."/>
            <person name="Koonin E.V."/>
            <person name="Pavlov A."/>
            <person name="Pavlova N."/>
            <person name="Karamychev V."/>
            <person name="Polouchine N."/>
            <person name="Shakhova V."/>
            <person name="Grigoriev I."/>
            <person name="Lou Y."/>
            <person name="Rohksar D."/>
            <person name="Lucas S."/>
            <person name="Huang K."/>
            <person name="Goodstein D.M."/>
            <person name="Hawkins T."/>
            <person name="Plengvidhya V."/>
            <person name="Welker D."/>
            <person name="Hughes J."/>
            <person name="Goh Y."/>
            <person name="Benson A."/>
            <person name="Baldwin K."/>
            <person name="Lee J.-H."/>
            <person name="Diaz-Muniz I."/>
            <person name="Dosti B."/>
            <person name="Smeianov V."/>
            <person name="Wechter W."/>
            <person name="Barabote R."/>
            <person name="Lorca G."/>
            <person name="Altermann E."/>
            <person name="Barrangou R."/>
            <person name="Ganesan B."/>
            <person name="Xie Y."/>
            <person name="Rawsthorne H."/>
            <person name="Tamir D."/>
            <person name="Parker C."/>
            <person name="Breidt F."/>
            <person name="Broadbent J.R."/>
            <person name="Hutkins R."/>
            <person name="O'Sullivan D."/>
            <person name="Steele J."/>
            <person name="Unlu G."/>
            <person name="Saier M.H. Jr."/>
            <person name="Klaenhammer T."/>
            <person name="Richardson P."/>
            <person name="Kozyavkin S."/>
            <person name="Weimer B.C."/>
            <person name="Mills D.A."/>
        </authorList>
    </citation>
    <scope>NUCLEOTIDE SEQUENCE [LARGE SCALE GENOMIC DNA]</scope>
    <source>
        <strain>ATCC 334 / BCRC 17002 / CCUG 31169 / CIP 107868 / KCTC 3260 / NRRL B-441</strain>
    </source>
</reference>
<comment type="function">
    <text evidence="1">GTPase that plays an essential role in the late steps of ribosome biogenesis.</text>
</comment>
<comment type="subunit">
    <text evidence="1">Associates with the 50S ribosomal subunit.</text>
</comment>
<comment type="similarity">
    <text evidence="1">Belongs to the TRAFAC class TrmE-Era-EngA-EngB-Septin-like GTPase superfamily. EngA (Der) GTPase family.</text>
</comment>
<organism>
    <name type="scientific">Lacticaseibacillus paracasei (strain ATCC 334 / BCRC 17002 / CCUG 31169 / CIP 107868 / KCTC 3260 / NRRL B-441)</name>
    <name type="common">Lactobacillus paracasei</name>
    <dbReference type="NCBI Taxonomy" id="321967"/>
    <lineage>
        <taxon>Bacteria</taxon>
        <taxon>Bacillati</taxon>
        <taxon>Bacillota</taxon>
        <taxon>Bacilli</taxon>
        <taxon>Lactobacillales</taxon>
        <taxon>Lactobacillaceae</taxon>
        <taxon>Lacticaseibacillus</taxon>
    </lineage>
</organism>
<proteinExistence type="inferred from homology"/>
<name>DER_LACP3</name>
<feature type="chain" id="PRO_1000011646" description="GTPase Der">
    <location>
        <begin position="1"/>
        <end position="435"/>
    </location>
</feature>
<feature type="domain" description="EngA-type G 1">
    <location>
        <begin position="4"/>
        <end position="167"/>
    </location>
</feature>
<feature type="domain" description="EngA-type G 2">
    <location>
        <begin position="175"/>
        <end position="350"/>
    </location>
</feature>
<feature type="domain" description="KH-like" evidence="1">
    <location>
        <begin position="351"/>
        <end position="435"/>
    </location>
</feature>
<feature type="binding site" evidence="1">
    <location>
        <begin position="10"/>
        <end position="17"/>
    </location>
    <ligand>
        <name>GTP</name>
        <dbReference type="ChEBI" id="CHEBI:37565"/>
        <label>1</label>
    </ligand>
</feature>
<feature type="binding site" evidence="1">
    <location>
        <begin position="57"/>
        <end position="61"/>
    </location>
    <ligand>
        <name>GTP</name>
        <dbReference type="ChEBI" id="CHEBI:37565"/>
        <label>1</label>
    </ligand>
</feature>
<feature type="binding site" evidence="1">
    <location>
        <begin position="119"/>
        <end position="122"/>
    </location>
    <ligand>
        <name>GTP</name>
        <dbReference type="ChEBI" id="CHEBI:37565"/>
        <label>1</label>
    </ligand>
</feature>
<feature type="binding site" evidence="1">
    <location>
        <begin position="181"/>
        <end position="188"/>
    </location>
    <ligand>
        <name>GTP</name>
        <dbReference type="ChEBI" id="CHEBI:37565"/>
        <label>2</label>
    </ligand>
</feature>
<feature type="binding site" evidence="1">
    <location>
        <begin position="228"/>
        <end position="232"/>
    </location>
    <ligand>
        <name>GTP</name>
        <dbReference type="ChEBI" id="CHEBI:37565"/>
        <label>2</label>
    </ligand>
</feature>
<feature type="binding site" evidence="1">
    <location>
        <begin position="293"/>
        <end position="296"/>
    </location>
    <ligand>
        <name>GTP</name>
        <dbReference type="ChEBI" id="CHEBI:37565"/>
        <label>2</label>
    </ligand>
</feature>